<evidence type="ECO:0000255" key="1">
    <source>
        <dbReference type="HAMAP-Rule" id="MF_00302"/>
    </source>
</evidence>
<feature type="chain" id="PRO_1000115470" description="ATP-dependent Clp protease adapter protein ClpS">
    <location>
        <begin position="1"/>
        <end position="106"/>
    </location>
</feature>
<dbReference type="EMBL" id="CP001144">
    <property type="protein sequence ID" value="ACH75107.1"/>
    <property type="molecule type" value="Genomic_DNA"/>
</dbReference>
<dbReference type="RefSeq" id="WP_000520789.1">
    <property type="nucleotide sequence ID" value="NC_011205.1"/>
</dbReference>
<dbReference type="SMR" id="B5FQ21"/>
<dbReference type="KEGG" id="sed:SeD_A1012"/>
<dbReference type="HOGENOM" id="CLU_134358_2_1_6"/>
<dbReference type="Proteomes" id="UP000008322">
    <property type="component" value="Chromosome"/>
</dbReference>
<dbReference type="GO" id="GO:0030163">
    <property type="term" value="P:protein catabolic process"/>
    <property type="evidence" value="ECO:0007669"/>
    <property type="project" value="InterPro"/>
</dbReference>
<dbReference type="GO" id="GO:0006508">
    <property type="term" value="P:proteolysis"/>
    <property type="evidence" value="ECO:0007669"/>
    <property type="project" value="UniProtKB-UniRule"/>
</dbReference>
<dbReference type="FunFam" id="3.30.1390.10:FF:000002">
    <property type="entry name" value="ATP-dependent Clp protease adapter protein ClpS"/>
    <property type="match status" value="1"/>
</dbReference>
<dbReference type="Gene3D" id="3.30.1390.10">
    <property type="match status" value="1"/>
</dbReference>
<dbReference type="HAMAP" id="MF_00302">
    <property type="entry name" value="ClpS"/>
    <property type="match status" value="1"/>
</dbReference>
<dbReference type="InterPro" id="IPR022935">
    <property type="entry name" value="ClpS"/>
</dbReference>
<dbReference type="InterPro" id="IPR003769">
    <property type="entry name" value="ClpS_core"/>
</dbReference>
<dbReference type="InterPro" id="IPR014719">
    <property type="entry name" value="Ribosomal_bL12_C/ClpS-like"/>
</dbReference>
<dbReference type="NCBIfam" id="NF000670">
    <property type="entry name" value="PRK00033.1-3"/>
    <property type="match status" value="1"/>
</dbReference>
<dbReference type="NCBIfam" id="NF000672">
    <property type="entry name" value="PRK00033.1-5"/>
    <property type="match status" value="1"/>
</dbReference>
<dbReference type="PANTHER" id="PTHR33473:SF19">
    <property type="entry name" value="ATP-DEPENDENT CLP PROTEASE ADAPTER PROTEIN CLPS"/>
    <property type="match status" value="1"/>
</dbReference>
<dbReference type="PANTHER" id="PTHR33473">
    <property type="entry name" value="ATP-DEPENDENT CLP PROTEASE ADAPTER PROTEIN CLPS1, CHLOROPLASTIC"/>
    <property type="match status" value="1"/>
</dbReference>
<dbReference type="Pfam" id="PF02617">
    <property type="entry name" value="ClpS"/>
    <property type="match status" value="1"/>
</dbReference>
<dbReference type="SUPFAM" id="SSF54736">
    <property type="entry name" value="ClpS-like"/>
    <property type="match status" value="1"/>
</dbReference>
<accession>B5FQ21</accession>
<comment type="function">
    <text evidence="1">Involved in the modulation of the specificity of the ClpAP-mediated ATP-dependent protein degradation.</text>
</comment>
<comment type="subunit">
    <text evidence="1">Binds to the N-terminal domain of the chaperone ClpA.</text>
</comment>
<comment type="similarity">
    <text evidence="1">Belongs to the ClpS family.</text>
</comment>
<proteinExistence type="inferred from homology"/>
<sequence>MGKTNDWLDFDQLVEDSVRDALKPPSMYKVILVNDDYTPMEFVIDVLQKFFSYDVERATQLMLAVHYQGKAICGVFTAEVAETKVAMVNKYARENEHPLLCTLEKA</sequence>
<protein>
    <recommendedName>
        <fullName evidence="1">ATP-dependent Clp protease adapter protein ClpS</fullName>
    </recommendedName>
</protein>
<reference key="1">
    <citation type="journal article" date="2011" name="J. Bacteriol.">
        <title>Comparative genomics of 28 Salmonella enterica isolates: evidence for CRISPR-mediated adaptive sublineage evolution.</title>
        <authorList>
            <person name="Fricke W.F."/>
            <person name="Mammel M.K."/>
            <person name="McDermott P.F."/>
            <person name="Tartera C."/>
            <person name="White D.G."/>
            <person name="Leclerc J.E."/>
            <person name="Ravel J."/>
            <person name="Cebula T.A."/>
        </authorList>
    </citation>
    <scope>NUCLEOTIDE SEQUENCE [LARGE SCALE GENOMIC DNA]</scope>
    <source>
        <strain>CT_02021853</strain>
    </source>
</reference>
<name>CLPS_SALDC</name>
<gene>
    <name evidence="1" type="primary">clpS</name>
    <name type="ordered locus">SeD_A1012</name>
</gene>
<organism>
    <name type="scientific">Salmonella dublin (strain CT_02021853)</name>
    <dbReference type="NCBI Taxonomy" id="439851"/>
    <lineage>
        <taxon>Bacteria</taxon>
        <taxon>Pseudomonadati</taxon>
        <taxon>Pseudomonadota</taxon>
        <taxon>Gammaproteobacteria</taxon>
        <taxon>Enterobacterales</taxon>
        <taxon>Enterobacteriaceae</taxon>
        <taxon>Salmonella</taxon>
    </lineage>
</organism>